<comment type="function">
    <text evidence="1">Involved in the biosynthesis of lipid A, a phosphorylated glycolipid that anchors the lipopolysaccharide to the outer membrane of the cell.</text>
</comment>
<comment type="catalytic activity">
    <reaction evidence="1">
        <text>a (3R)-hydroxyacyl-[ACP] + UDP-N-acetyl-alpha-D-glucosamine = a UDP-3-O-[(3R)-3-hydroxyacyl]-N-acetyl-alpha-D-glucosamine + holo-[ACP]</text>
        <dbReference type="Rhea" id="RHEA:67812"/>
        <dbReference type="Rhea" id="RHEA-COMP:9685"/>
        <dbReference type="Rhea" id="RHEA-COMP:9945"/>
        <dbReference type="ChEBI" id="CHEBI:57705"/>
        <dbReference type="ChEBI" id="CHEBI:64479"/>
        <dbReference type="ChEBI" id="CHEBI:78827"/>
        <dbReference type="ChEBI" id="CHEBI:173225"/>
        <dbReference type="EC" id="2.3.1.129"/>
    </reaction>
</comment>
<comment type="pathway">
    <text evidence="1">Glycolipid biosynthesis; lipid IV(A) biosynthesis; lipid IV(A) from (3R)-3-hydroxytetradecanoyl-[acyl-carrier-protein] and UDP-N-acetyl-alpha-D-glucosamine: step 1/6.</text>
</comment>
<comment type="subunit">
    <text evidence="1">Homotrimer.</text>
</comment>
<comment type="subcellular location">
    <subcellularLocation>
        <location evidence="1">Cytoplasm</location>
    </subcellularLocation>
</comment>
<comment type="similarity">
    <text evidence="1">Belongs to the transferase hexapeptide repeat family. LpxA subfamily.</text>
</comment>
<accession>Q9ZED5</accession>
<sequence length="264" mass="28471">MSNSNIHTTAIIAEGAKFGKNVKVGPYCIIGPEVVLHDNVELKSHVVIDGITEIGENTVIYPFASIGQPPQILKYANERSSTIIGSNNTIREYVTVQAGSKSGGMITRVGNNNLFMVGVHIGHDCKIGNNLVFANYVSLAGHIKVGDYAIIGGLSAVHQYTRIGEYSMIGGLSPVGADVIPFGLVSSKRAVLEGLNLIGMNRKGFDKADSLTALNAVEEIFLGEGNFVDRIKQVAEKYKNNSIVTQIIDFLNQDSSRAFCHFKK</sequence>
<name>LPXA_RICPR</name>
<feature type="chain" id="PRO_0000188065" description="Acyl-[acyl-carrier-protein]--UDP-N-acetylglucosamine O-acyltransferase">
    <location>
        <begin position="1"/>
        <end position="264"/>
    </location>
</feature>
<gene>
    <name evidence="1" type="primary">lpxA</name>
    <name type="ordered locus">RP007</name>
</gene>
<proteinExistence type="inferred from homology"/>
<evidence type="ECO:0000255" key="1">
    <source>
        <dbReference type="HAMAP-Rule" id="MF_00387"/>
    </source>
</evidence>
<organism>
    <name type="scientific">Rickettsia prowazekii (strain Madrid E)</name>
    <dbReference type="NCBI Taxonomy" id="272947"/>
    <lineage>
        <taxon>Bacteria</taxon>
        <taxon>Pseudomonadati</taxon>
        <taxon>Pseudomonadota</taxon>
        <taxon>Alphaproteobacteria</taxon>
        <taxon>Rickettsiales</taxon>
        <taxon>Rickettsiaceae</taxon>
        <taxon>Rickettsieae</taxon>
        <taxon>Rickettsia</taxon>
        <taxon>typhus group</taxon>
    </lineage>
</organism>
<protein>
    <recommendedName>
        <fullName evidence="1">Acyl-[acyl-carrier-protein]--UDP-N-acetylglucosamine O-acyltransferase</fullName>
        <shortName evidence="1">UDP-N-acetylglucosamine acyltransferase</shortName>
        <ecNumber evidence="1">2.3.1.129</ecNumber>
    </recommendedName>
</protein>
<reference key="1">
    <citation type="journal article" date="1998" name="Nature">
        <title>The genome sequence of Rickettsia prowazekii and the origin of mitochondria.</title>
        <authorList>
            <person name="Andersson S.G.E."/>
            <person name="Zomorodipour A."/>
            <person name="Andersson J.O."/>
            <person name="Sicheritz-Ponten T."/>
            <person name="Alsmark U.C.M."/>
            <person name="Podowski R.M."/>
            <person name="Naeslund A.K."/>
            <person name="Eriksson A.-S."/>
            <person name="Winkler H.H."/>
            <person name="Kurland C.G."/>
        </authorList>
    </citation>
    <scope>NUCLEOTIDE SEQUENCE [LARGE SCALE GENOMIC DNA]</scope>
    <source>
        <strain>Madrid E</strain>
    </source>
</reference>
<dbReference type="EC" id="2.3.1.129" evidence="1"/>
<dbReference type="EMBL" id="AJ235270">
    <property type="protein sequence ID" value="CAA14480.1"/>
    <property type="molecule type" value="Genomic_DNA"/>
</dbReference>
<dbReference type="PIR" id="A71708">
    <property type="entry name" value="A71708"/>
</dbReference>
<dbReference type="RefSeq" id="NP_220403.1">
    <property type="nucleotide sequence ID" value="NC_000963.1"/>
</dbReference>
<dbReference type="RefSeq" id="WP_004596702.1">
    <property type="nucleotide sequence ID" value="NC_000963.1"/>
</dbReference>
<dbReference type="SMR" id="Q9ZED5"/>
<dbReference type="STRING" id="272947.gene:17555090"/>
<dbReference type="EnsemblBacteria" id="CAA14480">
    <property type="protein sequence ID" value="CAA14480"/>
    <property type="gene ID" value="CAA14480"/>
</dbReference>
<dbReference type="GeneID" id="57569135"/>
<dbReference type="KEGG" id="rpr:RP007"/>
<dbReference type="PATRIC" id="fig|272947.5.peg.7"/>
<dbReference type="eggNOG" id="COG1043">
    <property type="taxonomic scope" value="Bacteria"/>
</dbReference>
<dbReference type="HOGENOM" id="CLU_061249_0_0_5"/>
<dbReference type="OrthoDB" id="9807278at2"/>
<dbReference type="UniPathway" id="UPA00359">
    <property type="reaction ID" value="UER00477"/>
</dbReference>
<dbReference type="Proteomes" id="UP000002480">
    <property type="component" value="Chromosome"/>
</dbReference>
<dbReference type="GO" id="GO:0005737">
    <property type="term" value="C:cytoplasm"/>
    <property type="evidence" value="ECO:0007669"/>
    <property type="project" value="UniProtKB-SubCell"/>
</dbReference>
<dbReference type="GO" id="GO:0016020">
    <property type="term" value="C:membrane"/>
    <property type="evidence" value="ECO:0007669"/>
    <property type="project" value="GOC"/>
</dbReference>
<dbReference type="GO" id="GO:0008780">
    <property type="term" value="F:acyl-[acyl-carrier-protein]-UDP-N-acetylglucosamine O-acyltransferase activity"/>
    <property type="evidence" value="ECO:0007669"/>
    <property type="project" value="UniProtKB-UniRule"/>
</dbReference>
<dbReference type="GO" id="GO:0009245">
    <property type="term" value="P:lipid A biosynthetic process"/>
    <property type="evidence" value="ECO:0007669"/>
    <property type="project" value="UniProtKB-UniRule"/>
</dbReference>
<dbReference type="CDD" id="cd03351">
    <property type="entry name" value="LbH_UDP-GlcNAc_AT"/>
    <property type="match status" value="1"/>
</dbReference>
<dbReference type="Gene3D" id="2.160.10.10">
    <property type="entry name" value="Hexapeptide repeat proteins"/>
    <property type="match status" value="1"/>
</dbReference>
<dbReference type="Gene3D" id="1.20.1180.10">
    <property type="entry name" value="Udp N-acetylglucosamine O-acyltransferase, C-terminal domain"/>
    <property type="match status" value="1"/>
</dbReference>
<dbReference type="HAMAP" id="MF_00387">
    <property type="entry name" value="LpxA"/>
    <property type="match status" value="1"/>
</dbReference>
<dbReference type="InterPro" id="IPR029098">
    <property type="entry name" value="Acetyltransf_C"/>
</dbReference>
<dbReference type="InterPro" id="IPR037157">
    <property type="entry name" value="Acetyltransf_C_sf"/>
</dbReference>
<dbReference type="InterPro" id="IPR001451">
    <property type="entry name" value="Hexapep"/>
</dbReference>
<dbReference type="InterPro" id="IPR010137">
    <property type="entry name" value="Lipid_A_LpxA"/>
</dbReference>
<dbReference type="InterPro" id="IPR011004">
    <property type="entry name" value="Trimer_LpxA-like_sf"/>
</dbReference>
<dbReference type="NCBIfam" id="TIGR01852">
    <property type="entry name" value="lipid_A_lpxA"/>
    <property type="match status" value="1"/>
</dbReference>
<dbReference type="NCBIfam" id="NF003657">
    <property type="entry name" value="PRK05289.1"/>
    <property type="match status" value="1"/>
</dbReference>
<dbReference type="PANTHER" id="PTHR43480">
    <property type="entry name" value="ACYL-[ACYL-CARRIER-PROTEIN]--UDP-N-ACETYLGLUCOSAMINE O-ACYLTRANSFERASE"/>
    <property type="match status" value="1"/>
</dbReference>
<dbReference type="PANTHER" id="PTHR43480:SF1">
    <property type="entry name" value="ACYL-[ACYL-CARRIER-PROTEIN]--UDP-N-ACETYLGLUCOSAMINE O-ACYLTRANSFERASE, MITOCHONDRIAL-RELATED"/>
    <property type="match status" value="1"/>
</dbReference>
<dbReference type="Pfam" id="PF13720">
    <property type="entry name" value="Acetyltransf_11"/>
    <property type="match status" value="1"/>
</dbReference>
<dbReference type="Pfam" id="PF00132">
    <property type="entry name" value="Hexapep"/>
    <property type="match status" value="1"/>
</dbReference>
<dbReference type="PIRSF" id="PIRSF000456">
    <property type="entry name" value="UDP-GlcNAc_acltr"/>
    <property type="match status" value="1"/>
</dbReference>
<dbReference type="SUPFAM" id="SSF51161">
    <property type="entry name" value="Trimeric LpxA-like enzymes"/>
    <property type="match status" value="1"/>
</dbReference>
<keyword id="KW-0012">Acyltransferase</keyword>
<keyword id="KW-0963">Cytoplasm</keyword>
<keyword id="KW-0441">Lipid A biosynthesis</keyword>
<keyword id="KW-0444">Lipid biosynthesis</keyword>
<keyword id="KW-0443">Lipid metabolism</keyword>
<keyword id="KW-1185">Reference proteome</keyword>
<keyword id="KW-0677">Repeat</keyword>
<keyword id="KW-0808">Transferase</keyword>